<keyword id="KW-0007">Acetylation</keyword>
<keyword id="KW-0009">Actin-binding</keyword>
<keyword id="KW-0112">Calmodulin-binding</keyword>
<keyword id="KW-0597">Phosphoprotein</keyword>
<keyword id="KW-1185">Reference proteome</keyword>
<keyword id="KW-0677">Repeat</keyword>
<comment type="function">
    <text evidence="1">Thin filament-associated protein that is implicated in the regulation and modulation of smooth muscle contraction. It is capable of binding to actin, calmodulin and tropomyosin. The interaction of calponin with actin inhibits the actomyosin Mg-ATPase activity (By similarity).</text>
</comment>
<comment type="similarity">
    <text evidence="5">Belongs to the calponin family.</text>
</comment>
<evidence type="ECO:0000250" key="1"/>
<evidence type="ECO:0000250" key="2">
    <source>
        <dbReference type="UniProtKB" id="Q99439"/>
    </source>
</evidence>
<evidence type="ECO:0000255" key="3">
    <source>
        <dbReference type="PROSITE-ProRule" id="PRU00044"/>
    </source>
</evidence>
<evidence type="ECO:0000256" key="4">
    <source>
        <dbReference type="SAM" id="MobiDB-lite"/>
    </source>
</evidence>
<evidence type="ECO:0000305" key="5"/>
<accession>Q3SYU6</accession>
<gene>
    <name type="primary">CNN2</name>
</gene>
<organism>
    <name type="scientific">Bos taurus</name>
    <name type="common">Bovine</name>
    <dbReference type="NCBI Taxonomy" id="9913"/>
    <lineage>
        <taxon>Eukaryota</taxon>
        <taxon>Metazoa</taxon>
        <taxon>Chordata</taxon>
        <taxon>Craniata</taxon>
        <taxon>Vertebrata</taxon>
        <taxon>Euteleostomi</taxon>
        <taxon>Mammalia</taxon>
        <taxon>Eutheria</taxon>
        <taxon>Laurasiatheria</taxon>
        <taxon>Artiodactyla</taxon>
        <taxon>Ruminantia</taxon>
        <taxon>Pecora</taxon>
        <taxon>Bovidae</taxon>
        <taxon>Bovinae</taxon>
        <taxon>Bos</taxon>
    </lineage>
</organism>
<feature type="initiator methionine" description="Removed" evidence="2">
    <location>
        <position position="1"/>
    </location>
</feature>
<feature type="chain" id="PRO_0000232497" description="Calponin-2">
    <location>
        <begin position="2"/>
        <end position="309"/>
    </location>
</feature>
<feature type="domain" description="Calponin-homology (CH)" evidence="3">
    <location>
        <begin position="28"/>
        <end position="132"/>
    </location>
</feature>
<feature type="repeat" description="Calponin-like 1">
    <location>
        <begin position="166"/>
        <end position="191"/>
    </location>
</feature>
<feature type="repeat" description="Calponin-like 2">
    <location>
        <begin position="206"/>
        <end position="231"/>
    </location>
</feature>
<feature type="repeat" description="Calponin-like 3">
    <location>
        <begin position="245"/>
        <end position="269"/>
    </location>
</feature>
<feature type="region of interest" description="Disordered" evidence="4">
    <location>
        <begin position="273"/>
        <end position="309"/>
    </location>
</feature>
<feature type="compositionally biased region" description="Low complexity" evidence="4">
    <location>
        <begin position="277"/>
        <end position="288"/>
    </location>
</feature>
<feature type="modified residue" description="N-acetylserine" evidence="2">
    <location>
        <position position="2"/>
    </location>
</feature>
<feature type="modified residue" description="N6-acetyllysine" evidence="2">
    <location>
        <position position="8"/>
    </location>
</feature>
<feature type="modified residue" description="N6-acetyllysine" evidence="2">
    <location>
        <position position="25"/>
    </location>
</feature>
<feature type="modified residue" description="Phosphoserine" evidence="2">
    <location>
        <position position="138"/>
    </location>
</feature>
<sequence length="309" mass="33438">MSSTQFNKGPSYGLSAEVKNRLQSKYDPQKEAELRSWIEGLTGLSVGPDFQKGLKDGIILCTLMNKLQPGSVPKINRSMQNWHQLENLSNFIKAMVSYGMNPVDLFEANDLFESGNLTQVQVSLLALAGKAKTKGLQSGVDIGVKYSEKQERNFDDATMKAGQCVIGLQMGTNKCASQSGMTAYGTRRHLYDPKNHILPPMDHSTISLQMGTNKCASQVGMTAPGTRRHIYDTKLGTDKCDNSSMSLQMGYTQGANQSGQVFGLGRQIYDPKYCPQGPAADGAPAAAGDGPGPGEPSECPPYYQEEAGY</sequence>
<protein>
    <recommendedName>
        <fullName>Calponin-2</fullName>
    </recommendedName>
    <alternativeName>
        <fullName>Calponin H2, smooth muscle</fullName>
    </alternativeName>
    <alternativeName>
        <fullName>Neutral calponin</fullName>
    </alternativeName>
</protein>
<reference key="1">
    <citation type="submission" date="2005-08" db="EMBL/GenBank/DDBJ databases">
        <authorList>
            <consortium name="NIH - Mammalian Gene Collection (MGC) project"/>
        </authorList>
    </citation>
    <scope>NUCLEOTIDE SEQUENCE [LARGE SCALE MRNA]</scope>
    <source>
        <strain>Crossbred X Angus</strain>
        <tissue>Ileum</tissue>
    </source>
</reference>
<name>CNN2_BOVIN</name>
<proteinExistence type="evidence at transcript level"/>
<dbReference type="EMBL" id="BC103380">
    <property type="protein sequence ID" value="AAI03381.1"/>
    <property type="molecule type" value="mRNA"/>
</dbReference>
<dbReference type="RefSeq" id="NP_001030497.1">
    <property type="nucleotide sequence ID" value="NM_001035420.1"/>
</dbReference>
<dbReference type="SMR" id="Q3SYU6"/>
<dbReference type="FunCoup" id="Q3SYU6">
    <property type="interactions" value="1166"/>
</dbReference>
<dbReference type="STRING" id="9913.ENSBTAP00000027670"/>
<dbReference type="PaxDb" id="9913-ENSBTAP00000027670"/>
<dbReference type="PeptideAtlas" id="Q3SYU6"/>
<dbReference type="Ensembl" id="ENSBTAT00000027670.6">
    <property type="protein sequence ID" value="ENSBTAP00000027670.5"/>
    <property type="gene ID" value="ENSBTAG00000020764.7"/>
</dbReference>
<dbReference type="GeneID" id="539019"/>
<dbReference type="KEGG" id="bta:539019"/>
<dbReference type="CTD" id="1265"/>
<dbReference type="VEuPathDB" id="HostDB:ENSBTAG00000020764"/>
<dbReference type="VGNC" id="VGNC:27509">
    <property type="gene designation" value="CNN2"/>
</dbReference>
<dbReference type="eggNOG" id="KOG2046">
    <property type="taxonomic scope" value="Eukaryota"/>
</dbReference>
<dbReference type="GeneTree" id="ENSGT00940000154355"/>
<dbReference type="HOGENOM" id="CLU_055232_0_2_1"/>
<dbReference type="InParanoid" id="Q3SYU6"/>
<dbReference type="OMA" id="DSKYCPK"/>
<dbReference type="OrthoDB" id="21595at2759"/>
<dbReference type="Reactome" id="R-BTA-6798695">
    <property type="pathway name" value="Neutrophil degranulation"/>
</dbReference>
<dbReference type="Proteomes" id="UP000009136">
    <property type="component" value="Chromosome 7"/>
</dbReference>
<dbReference type="Bgee" id="ENSBTAG00000020764">
    <property type="expression patterns" value="Expressed in blood and 105 other cell types or tissues"/>
</dbReference>
<dbReference type="GO" id="GO:0015629">
    <property type="term" value="C:actin cytoskeleton"/>
    <property type="evidence" value="ECO:0000318"/>
    <property type="project" value="GO_Central"/>
</dbReference>
<dbReference type="GO" id="GO:0051015">
    <property type="term" value="F:actin filament binding"/>
    <property type="evidence" value="ECO:0000318"/>
    <property type="project" value="GO_Central"/>
</dbReference>
<dbReference type="GO" id="GO:0005516">
    <property type="term" value="F:calmodulin binding"/>
    <property type="evidence" value="ECO:0007669"/>
    <property type="project" value="UniProtKB-KW"/>
</dbReference>
<dbReference type="GO" id="GO:0007015">
    <property type="term" value="P:actin filament organization"/>
    <property type="evidence" value="ECO:0000318"/>
    <property type="project" value="GO_Central"/>
</dbReference>
<dbReference type="GO" id="GO:0031032">
    <property type="term" value="P:actomyosin structure organization"/>
    <property type="evidence" value="ECO:0007669"/>
    <property type="project" value="InterPro"/>
</dbReference>
<dbReference type="CDD" id="cd21283">
    <property type="entry name" value="CH_CNN2"/>
    <property type="match status" value="1"/>
</dbReference>
<dbReference type="FunFam" id="1.10.418.10:FF:000040">
    <property type="entry name" value="Calponin"/>
    <property type="match status" value="1"/>
</dbReference>
<dbReference type="Gene3D" id="1.10.418.10">
    <property type="entry name" value="Calponin-like domain"/>
    <property type="match status" value="1"/>
</dbReference>
<dbReference type="InterPro" id="IPR050606">
    <property type="entry name" value="Calponin-like"/>
</dbReference>
<dbReference type="InterPro" id="IPR001997">
    <property type="entry name" value="Calponin/LIMCH1"/>
</dbReference>
<dbReference type="InterPro" id="IPR000557">
    <property type="entry name" value="Calponin_repeat"/>
</dbReference>
<dbReference type="InterPro" id="IPR001715">
    <property type="entry name" value="CH_dom"/>
</dbReference>
<dbReference type="InterPro" id="IPR036872">
    <property type="entry name" value="CH_dom_sf"/>
</dbReference>
<dbReference type="InterPro" id="IPR003096">
    <property type="entry name" value="SM22_calponin"/>
</dbReference>
<dbReference type="PANTHER" id="PTHR47385">
    <property type="entry name" value="CALPONIN"/>
    <property type="match status" value="1"/>
</dbReference>
<dbReference type="PANTHER" id="PTHR47385:SF7">
    <property type="entry name" value="CALPONIN-2"/>
    <property type="match status" value="1"/>
</dbReference>
<dbReference type="Pfam" id="PF00402">
    <property type="entry name" value="Calponin"/>
    <property type="match status" value="3"/>
</dbReference>
<dbReference type="Pfam" id="PF00307">
    <property type="entry name" value="CH"/>
    <property type="match status" value="1"/>
</dbReference>
<dbReference type="PRINTS" id="PR00889">
    <property type="entry name" value="CALPONIN"/>
</dbReference>
<dbReference type="PRINTS" id="PR00888">
    <property type="entry name" value="SM22CALPONIN"/>
</dbReference>
<dbReference type="SMART" id="SM00033">
    <property type="entry name" value="CH"/>
    <property type="match status" value="1"/>
</dbReference>
<dbReference type="SUPFAM" id="SSF47576">
    <property type="entry name" value="Calponin-homology domain, CH-domain"/>
    <property type="match status" value="1"/>
</dbReference>
<dbReference type="PROSITE" id="PS01052">
    <property type="entry name" value="CALPONIN_1"/>
    <property type="match status" value="3"/>
</dbReference>
<dbReference type="PROSITE" id="PS51122">
    <property type="entry name" value="CALPONIN_2"/>
    <property type="match status" value="3"/>
</dbReference>
<dbReference type="PROSITE" id="PS50021">
    <property type="entry name" value="CH"/>
    <property type="match status" value="1"/>
</dbReference>